<sequence length="923" mass="106036">MDYSSTINLPKTAFPMKAGLKEKEPKIIKKWEEEKLYQQLRELRKGAPKCILHDGPPYANGDIHIGTSLNKIIKDIIVRYKSAKGFDSPYVPGWDCHGMPIELKVQESLGDKYKETSKFIMRKKCRAYAQKYIDIQRKEFKRLGVMGDWENPYLTMSPEYESEIVEVFAQLVEKGYIYKGLRTIHWCMDCETALAAAEIEYDDNHTSTSVYVRFPVLNKINDKLDGNVDVMIWTTTPWTLPSNMACAFNRDLEYVAVEIDGRYAIMTTSLVDTVLSKKDMKAEGRDMIPVSMEDIEKLEIAHPFIKDRKSAVVFADYVEATAGTGIVHTAPGHGMEDYQTGMNYGLEIYCPVDKAGRYTSDFPEMQGMKVRDANPKVVEILENNGSLYHKEKVTHSYPICWRCKNPLIFRATSQWFMNMTHDDIDKRTVKALDNIKWYPTWGHDRMQKMLENRPDWCLSRQRSWGVPIPAFYCKNCGKTLLTAESTRHFAEIVKTKGMDVWFELEAKDLLPEGTKCECGSTDFDKEQDILDVWFDSGVSSFAAQKTNKDLDGVFPVDIYLEGGDQYRGWFQAAIWPSMAIRGIPPYKELVTHGWTLDEQGRAMHKSAGNVVSPLEVIDKYGADILRLWCISEDFTHNARVGDNMMKAIADNYRKIRNTFRYLLGNISDFDFTKEKIEVKDLLPVDRYALSRLHSFIKVAEKACDGYEFHLFYQRLINYCVVELSATYFDIIKDRLYCDRKDSVSRRSAQTVLVEILDVLVKLIAPVLPFTTDEVWGYYKGENASSVHLELYPKADDNLIDLELEKEWTSILKVRDDVLLSLERARDNSTIGKSLEAYVTICTKEPATKELLTKYEKYLNEIFIVSKVTLSDSKDDTFIEGGVSFVKTEKASHEKCVRCWGHYDSVGTDSEHKELCTRCAEAVR</sequence>
<dbReference type="EC" id="6.1.1.5" evidence="1"/>
<dbReference type="EMBL" id="CP001357">
    <property type="protein sequence ID" value="ACN83800.1"/>
    <property type="molecule type" value="Genomic_DNA"/>
</dbReference>
<dbReference type="RefSeq" id="WP_012670845.1">
    <property type="nucleotide sequence ID" value="NC_012225.1"/>
</dbReference>
<dbReference type="SMR" id="C0R112"/>
<dbReference type="STRING" id="565034.BHWA1_01321"/>
<dbReference type="KEGG" id="bhy:BHWA1_01321"/>
<dbReference type="eggNOG" id="COG0060">
    <property type="taxonomic scope" value="Bacteria"/>
</dbReference>
<dbReference type="HOGENOM" id="CLU_001493_7_0_12"/>
<dbReference type="Proteomes" id="UP000001803">
    <property type="component" value="Chromosome"/>
</dbReference>
<dbReference type="GO" id="GO:0005829">
    <property type="term" value="C:cytosol"/>
    <property type="evidence" value="ECO:0007669"/>
    <property type="project" value="TreeGrafter"/>
</dbReference>
<dbReference type="GO" id="GO:0002161">
    <property type="term" value="F:aminoacyl-tRNA deacylase activity"/>
    <property type="evidence" value="ECO:0007669"/>
    <property type="project" value="InterPro"/>
</dbReference>
<dbReference type="GO" id="GO:0005524">
    <property type="term" value="F:ATP binding"/>
    <property type="evidence" value="ECO:0007669"/>
    <property type="project" value="UniProtKB-UniRule"/>
</dbReference>
<dbReference type="GO" id="GO:0004822">
    <property type="term" value="F:isoleucine-tRNA ligase activity"/>
    <property type="evidence" value="ECO:0007669"/>
    <property type="project" value="UniProtKB-UniRule"/>
</dbReference>
<dbReference type="GO" id="GO:0000049">
    <property type="term" value="F:tRNA binding"/>
    <property type="evidence" value="ECO:0007669"/>
    <property type="project" value="InterPro"/>
</dbReference>
<dbReference type="GO" id="GO:0008270">
    <property type="term" value="F:zinc ion binding"/>
    <property type="evidence" value="ECO:0007669"/>
    <property type="project" value="UniProtKB-UniRule"/>
</dbReference>
<dbReference type="GO" id="GO:0006428">
    <property type="term" value="P:isoleucyl-tRNA aminoacylation"/>
    <property type="evidence" value="ECO:0007669"/>
    <property type="project" value="UniProtKB-UniRule"/>
</dbReference>
<dbReference type="CDD" id="cd07960">
    <property type="entry name" value="Anticodon_Ia_Ile_BEm"/>
    <property type="match status" value="1"/>
</dbReference>
<dbReference type="CDD" id="cd00818">
    <property type="entry name" value="IleRS_core"/>
    <property type="match status" value="1"/>
</dbReference>
<dbReference type="FunFam" id="3.40.50.620:FF:000152">
    <property type="entry name" value="Isoleucine--tRNA ligase"/>
    <property type="match status" value="1"/>
</dbReference>
<dbReference type="Gene3D" id="1.10.730.20">
    <property type="match status" value="1"/>
</dbReference>
<dbReference type="Gene3D" id="3.40.50.620">
    <property type="entry name" value="HUPs"/>
    <property type="match status" value="2"/>
</dbReference>
<dbReference type="Gene3D" id="1.10.10.830">
    <property type="entry name" value="Ile-tRNA synthetase CP2 domain-like"/>
    <property type="match status" value="1"/>
</dbReference>
<dbReference type="Gene3D" id="3.90.740.10">
    <property type="entry name" value="Valyl/Leucyl/Isoleucyl-tRNA synthetase, editing domain"/>
    <property type="match status" value="1"/>
</dbReference>
<dbReference type="HAMAP" id="MF_02002">
    <property type="entry name" value="Ile_tRNA_synth_type1"/>
    <property type="match status" value="1"/>
</dbReference>
<dbReference type="InterPro" id="IPR001412">
    <property type="entry name" value="aa-tRNA-synth_I_CS"/>
</dbReference>
<dbReference type="InterPro" id="IPR002300">
    <property type="entry name" value="aa-tRNA-synth_Ia"/>
</dbReference>
<dbReference type="InterPro" id="IPR033708">
    <property type="entry name" value="Anticodon_Ile_BEm"/>
</dbReference>
<dbReference type="InterPro" id="IPR002301">
    <property type="entry name" value="Ile-tRNA-ligase"/>
</dbReference>
<dbReference type="InterPro" id="IPR023585">
    <property type="entry name" value="Ile-tRNA-ligase_type1"/>
</dbReference>
<dbReference type="InterPro" id="IPR050081">
    <property type="entry name" value="Ile-tRNA_ligase"/>
</dbReference>
<dbReference type="InterPro" id="IPR013155">
    <property type="entry name" value="M/V/L/I-tRNA-synth_anticd-bd"/>
</dbReference>
<dbReference type="InterPro" id="IPR014729">
    <property type="entry name" value="Rossmann-like_a/b/a_fold"/>
</dbReference>
<dbReference type="InterPro" id="IPR009080">
    <property type="entry name" value="tRNAsynth_Ia_anticodon-bd"/>
</dbReference>
<dbReference type="InterPro" id="IPR009008">
    <property type="entry name" value="Val/Leu/Ile-tRNA-synth_edit"/>
</dbReference>
<dbReference type="InterPro" id="IPR010663">
    <property type="entry name" value="Znf_FPG/IleRS"/>
</dbReference>
<dbReference type="NCBIfam" id="TIGR00392">
    <property type="entry name" value="ileS"/>
    <property type="match status" value="1"/>
</dbReference>
<dbReference type="PANTHER" id="PTHR42765:SF1">
    <property type="entry name" value="ISOLEUCINE--TRNA LIGASE, MITOCHONDRIAL"/>
    <property type="match status" value="1"/>
</dbReference>
<dbReference type="PANTHER" id="PTHR42765">
    <property type="entry name" value="SOLEUCYL-TRNA SYNTHETASE"/>
    <property type="match status" value="1"/>
</dbReference>
<dbReference type="Pfam" id="PF08264">
    <property type="entry name" value="Anticodon_1"/>
    <property type="match status" value="1"/>
</dbReference>
<dbReference type="Pfam" id="PF00133">
    <property type="entry name" value="tRNA-synt_1"/>
    <property type="match status" value="1"/>
</dbReference>
<dbReference type="Pfam" id="PF06827">
    <property type="entry name" value="zf-FPG_IleRS"/>
    <property type="match status" value="1"/>
</dbReference>
<dbReference type="PRINTS" id="PR00984">
    <property type="entry name" value="TRNASYNTHILE"/>
</dbReference>
<dbReference type="SUPFAM" id="SSF47323">
    <property type="entry name" value="Anticodon-binding domain of a subclass of class I aminoacyl-tRNA synthetases"/>
    <property type="match status" value="1"/>
</dbReference>
<dbReference type="SUPFAM" id="SSF52374">
    <property type="entry name" value="Nucleotidylyl transferase"/>
    <property type="match status" value="1"/>
</dbReference>
<dbReference type="SUPFAM" id="SSF50677">
    <property type="entry name" value="ValRS/IleRS/LeuRS editing domain"/>
    <property type="match status" value="1"/>
</dbReference>
<dbReference type="PROSITE" id="PS00178">
    <property type="entry name" value="AA_TRNA_LIGASE_I"/>
    <property type="match status" value="1"/>
</dbReference>
<feature type="chain" id="PRO_1000189131" description="Isoleucine--tRNA ligase">
    <location>
        <begin position="1"/>
        <end position="923"/>
    </location>
</feature>
<feature type="short sequence motif" description="'HIGH' region">
    <location>
        <begin position="57"/>
        <end position="67"/>
    </location>
</feature>
<feature type="short sequence motif" description="'KMSKS' region">
    <location>
        <begin position="602"/>
        <end position="606"/>
    </location>
</feature>
<feature type="binding site" evidence="1">
    <location>
        <position position="561"/>
    </location>
    <ligand>
        <name>L-isoleucyl-5'-AMP</name>
        <dbReference type="ChEBI" id="CHEBI:178002"/>
    </ligand>
</feature>
<feature type="binding site" evidence="1">
    <location>
        <position position="605"/>
    </location>
    <ligand>
        <name>ATP</name>
        <dbReference type="ChEBI" id="CHEBI:30616"/>
    </ligand>
</feature>
<feature type="binding site" evidence="1">
    <location>
        <position position="895"/>
    </location>
    <ligand>
        <name>Zn(2+)</name>
        <dbReference type="ChEBI" id="CHEBI:29105"/>
    </ligand>
</feature>
<feature type="binding site" evidence="1">
    <location>
        <position position="898"/>
    </location>
    <ligand>
        <name>Zn(2+)</name>
        <dbReference type="ChEBI" id="CHEBI:29105"/>
    </ligand>
</feature>
<feature type="binding site" evidence="1">
    <location>
        <position position="915"/>
    </location>
    <ligand>
        <name>Zn(2+)</name>
        <dbReference type="ChEBI" id="CHEBI:29105"/>
    </ligand>
</feature>
<feature type="binding site" evidence="1">
    <location>
        <position position="918"/>
    </location>
    <ligand>
        <name>Zn(2+)</name>
        <dbReference type="ChEBI" id="CHEBI:29105"/>
    </ligand>
</feature>
<evidence type="ECO:0000255" key="1">
    <source>
        <dbReference type="HAMAP-Rule" id="MF_02002"/>
    </source>
</evidence>
<gene>
    <name evidence="1" type="primary">ileS</name>
    <name type="ordered locus">BHWA1_01321</name>
</gene>
<accession>C0R112</accession>
<protein>
    <recommendedName>
        <fullName evidence="1">Isoleucine--tRNA ligase</fullName>
        <ecNumber evidence="1">6.1.1.5</ecNumber>
    </recommendedName>
    <alternativeName>
        <fullName evidence="1">Isoleucyl-tRNA synthetase</fullName>
        <shortName evidence="1">IleRS</shortName>
    </alternativeName>
</protein>
<keyword id="KW-0030">Aminoacyl-tRNA synthetase</keyword>
<keyword id="KW-0067">ATP-binding</keyword>
<keyword id="KW-0963">Cytoplasm</keyword>
<keyword id="KW-0436">Ligase</keyword>
<keyword id="KW-0479">Metal-binding</keyword>
<keyword id="KW-0547">Nucleotide-binding</keyword>
<keyword id="KW-0648">Protein biosynthesis</keyword>
<keyword id="KW-0862">Zinc</keyword>
<name>SYI_BRAHW</name>
<comment type="function">
    <text evidence="1">Catalyzes the attachment of isoleucine to tRNA(Ile). As IleRS can inadvertently accommodate and process structurally similar amino acids such as valine, to avoid such errors it has two additional distinct tRNA(Ile)-dependent editing activities. One activity is designated as 'pretransfer' editing and involves the hydrolysis of activated Val-AMP. The other activity is designated 'posttransfer' editing and involves deacylation of mischarged Val-tRNA(Ile).</text>
</comment>
<comment type="catalytic activity">
    <reaction evidence="1">
        <text>tRNA(Ile) + L-isoleucine + ATP = L-isoleucyl-tRNA(Ile) + AMP + diphosphate</text>
        <dbReference type="Rhea" id="RHEA:11060"/>
        <dbReference type="Rhea" id="RHEA-COMP:9666"/>
        <dbReference type="Rhea" id="RHEA-COMP:9695"/>
        <dbReference type="ChEBI" id="CHEBI:30616"/>
        <dbReference type="ChEBI" id="CHEBI:33019"/>
        <dbReference type="ChEBI" id="CHEBI:58045"/>
        <dbReference type="ChEBI" id="CHEBI:78442"/>
        <dbReference type="ChEBI" id="CHEBI:78528"/>
        <dbReference type="ChEBI" id="CHEBI:456215"/>
        <dbReference type="EC" id="6.1.1.5"/>
    </reaction>
</comment>
<comment type="cofactor">
    <cofactor evidence="1">
        <name>Zn(2+)</name>
        <dbReference type="ChEBI" id="CHEBI:29105"/>
    </cofactor>
    <text evidence="1">Binds 1 zinc ion per subunit.</text>
</comment>
<comment type="subunit">
    <text evidence="1">Monomer.</text>
</comment>
<comment type="subcellular location">
    <subcellularLocation>
        <location evidence="1">Cytoplasm</location>
    </subcellularLocation>
</comment>
<comment type="domain">
    <text evidence="1">IleRS has two distinct active sites: one for aminoacylation and one for editing. The misactivated valine is translocated from the active site to the editing site, which sterically excludes the correctly activated isoleucine. The single editing site contains two valyl binding pockets, one specific for each substrate (Val-AMP or Val-tRNA(Ile)).</text>
</comment>
<comment type="similarity">
    <text evidence="1">Belongs to the class-I aminoacyl-tRNA synthetase family. IleS type 1 subfamily.</text>
</comment>
<proteinExistence type="inferred from homology"/>
<reference key="1">
    <citation type="journal article" date="2009" name="PLoS ONE">
        <title>Genome sequence of the pathogenic intestinal spirochete Brachyspira hyodysenteriae reveals adaptations to its lifestyle in the porcine large intestine.</title>
        <authorList>
            <person name="Bellgard M.I."/>
            <person name="Wanchanthuek P."/>
            <person name="La T."/>
            <person name="Ryan K."/>
            <person name="Moolhuijzen P."/>
            <person name="Albertyn Z."/>
            <person name="Shaban B."/>
            <person name="Motro Y."/>
            <person name="Dunn D.S."/>
            <person name="Schibeci D."/>
            <person name="Hunter A."/>
            <person name="Barrero R."/>
            <person name="Phillips N.D."/>
            <person name="Hampson D.J."/>
        </authorList>
    </citation>
    <scope>NUCLEOTIDE SEQUENCE [LARGE SCALE GENOMIC DNA]</scope>
    <source>
        <strain>ATCC 49526 / WA1</strain>
    </source>
</reference>
<organism>
    <name type="scientific">Brachyspira hyodysenteriae (strain ATCC 49526 / WA1)</name>
    <dbReference type="NCBI Taxonomy" id="565034"/>
    <lineage>
        <taxon>Bacteria</taxon>
        <taxon>Pseudomonadati</taxon>
        <taxon>Spirochaetota</taxon>
        <taxon>Spirochaetia</taxon>
        <taxon>Brachyspirales</taxon>
        <taxon>Brachyspiraceae</taxon>
        <taxon>Brachyspira</taxon>
    </lineage>
</organism>